<reference key="1">
    <citation type="submission" date="2007-11" db="EMBL/GenBank/DDBJ databases">
        <authorList>
            <consortium name="The Salmonella enterica serovar Arizonae Genome Sequencing Project"/>
            <person name="McClelland M."/>
            <person name="Sanderson E.K."/>
            <person name="Porwollik S."/>
            <person name="Spieth J."/>
            <person name="Clifton W.S."/>
            <person name="Fulton R."/>
            <person name="Chunyan W."/>
            <person name="Wollam A."/>
            <person name="Shah N."/>
            <person name="Pepin K."/>
            <person name="Bhonagiri V."/>
            <person name="Nash W."/>
            <person name="Johnson M."/>
            <person name="Thiruvilangam P."/>
            <person name="Wilson R."/>
        </authorList>
    </citation>
    <scope>NUCLEOTIDE SEQUENCE [LARGE SCALE GENOMIC DNA]</scope>
    <source>
        <strain>ATCC BAA-731 / CDC346-86 / RSK2980</strain>
    </source>
</reference>
<organism>
    <name type="scientific">Salmonella arizonae (strain ATCC BAA-731 / CDC346-86 / RSK2980)</name>
    <dbReference type="NCBI Taxonomy" id="41514"/>
    <lineage>
        <taxon>Bacteria</taxon>
        <taxon>Pseudomonadati</taxon>
        <taxon>Pseudomonadota</taxon>
        <taxon>Gammaproteobacteria</taxon>
        <taxon>Enterobacterales</taxon>
        <taxon>Enterobacteriaceae</taxon>
        <taxon>Salmonella</taxon>
    </lineage>
</organism>
<keyword id="KW-0997">Cell inner membrane</keyword>
<keyword id="KW-1003">Cell membrane</keyword>
<keyword id="KW-0472">Membrane</keyword>
<keyword id="KW-1185">Reference proteome</keyword>
<keyword id="KW-0812">Transmembrane</keyword>
<keyword id="KW-1133">Transmembrane helix</keyword>
<dbReference type="EMBL" id="CP000880">
    <property type="protein sequence ID" value="ABX23525.1"/>
    <property type="molecule type" value="Genomic_DNA"/>
</dbReference>
<dbReference type="STRING" id="41514.SARI_03725"/>
<dbReference type="KEGG" id="ses:SARI_03725"/>
<dbReference type="HOGENOM" id="CLU_049711_0_0_6"/>
<dbReference type="UniPathway" id="UPA00566"/>
<dbReference type="Proteomes" id="UP000002084">
    <property type="component" value="Chromosome"/>
</dbReference>
<dbReference type="GO" id="GO:0005886">
    <property type="term" value="C:plasma membrane"/>
    <property type="evidence" value="ECO:0007669"/>
    <property type="project" value="UniProtKB-SubCell"/>
</dbReference>
<dbReference type="GO" id="GO:0009246">
    <property type="term" value="P:enterobacterial common antigen biosynthetic process"/>
    <property type="evidence" value="ECO:0007669"/>
    <property type="project" value="UniProtKB-UniRule"/>
</dbReference>
<dbReference type="HAMAP" id="MF_01003">
    <property type="entry name" value="WzyE"/>
    <property type="match status" value="1"/>
</dbReference>
<dbReference type="InterPro" id="IPR010691">
    <property type="entry name" value="WzyE"/>
</dbReference>
<dbReference type="NCBIfam" id="NF002820">
    <property type="entry name" value="PRK02975.1"/>
    <property type="match status" value="1"/>
</dbReference>
<dbReference type="Pfam" id="PF06899">
    <property type="entry name" value="WzyE"/>
    <property type="match status" value="1"/>
</dbReference>
<comment type="function">
    <text evidence="1">Probably involved in the polymerization of enterobacterial common antigen (ECA) trisaccharide repeat units.</text>
</comment>
<comment type="pathway">
    <text evidence="1">Bacterial outer membrane biogenesis; enterobacterial common antigen biosynthesis.</text>
</comment>
<comment type="subunit">
    <text evidence="1">Probably part of a complex composed of WzxE, WzyE and WzzE.</text>
</comment>
<comment type="subcellular location">
    <subcellularLocation>
        <location evidence="1">Cell inner membrane</location>
        <topology evidence="1">Multi-pass membrane protein</topology>
    </subcellularLocation>
</comment>
<comment type="similarity">
    <text evidence="1">Belongs to the WzyE family.</text>
</comment>
<proteinExistence type="inferred from homology"/>
<accession>A9MJ16</accession>
<feature type="chain" id="PRO_1000083953" description="Probable ECA polymerase">
    <location>
        <begin position="1"/>
        <end position="452"/>
    </location>
</feature>
<feature type="transmembrane region" description="Helical" evidence="1">
    <location>
        <begin position="6"/>
        <end position="26"/>
    </location>
</feature>
<feature type="transmembrane region" description="Helical" evidence="1">
    <location>
        <begin position="37"/>
        <end position="57"/>
    </location>
</feature>
<feature type="transmembrane region" description="Helical" evidence="1">
    <location>
        <begin position="63"/>
        <end position="83"/>
    </location>
</feature>
<feature type="transmembrane region" description="Helical" evidence="1">
    <location>
        <begin position="118"/>
        <end position="138"/>
    </location>
</feature>
<feature type="transmembrane region" description="Helical" evidence="1">
    <location>
        <begin position="155"/>
        <end position="175"/>
    </location>
</feature>
<feature type="transmembrane region" description="Helical" evidence="1">
    <location>
        <begin position="181"/>
        <end position="201"/>
    </location>
</feature>
<feature type="transmembrane region" description="Helical" evidence="1">
    <location>
        <begin position="207"/>
        <end position="227"/>
    </location>
</feature>
<feature type="transmembrane region" description="Helical" evidence="1">
    <location>
        <begin position="228"/>
        <end position="248"/>
    </location>
</feature>
<feature type="transmembrane region" description="Helical" evidence="1">
    <location>
        <begin position="341"/>
        <end position="361"/>
    </location>
</feature>
<feature type="transmembrane region" description="Helical" evidence="1">
    <location>
        <begin position="378"/>
        <end position="398"/>
    </location>
</feature>
<feature type="transmembrane region" description="Helical" evidence="1">
    <location>
        <begin position="410"/>
        <end position="430"/>
    </location>
</feature>
<gene>
    <name evidence="1" type="primary">wzyE</name>
    <name type="ordered locus">SARI_03725</name>
</gene>
<evidence type="ECO:0000255" key="1">
    <source>
        <dbReference type="HAMAP-Rule" id="MF_01003"/>
    </source>
</evidence>
<name>WZYE_SALAR</name>
<sequence>MNLMQFSGLLVVWLLSTLFIATLTWFEFRRVRFNFNVFFSLLFLLTFFFGFPLTSVLVFRFDVGVAPPEILLQALLSAACFYGVYYVTYKTRLRKRVVDVTRKPLFTMNRVETHLTWVILMGIALVSVGIFFMHNGFLLFRLHSYSQIFSSEVSGVALKRFFYFFIPAMLVVYFLRQDSKAWLFFLVSTVAFGLLTYMIVGGTRANIIIAFAIFLFIGIIRGWISLWMLAAAGVLGIVGMFWLALKRYGLNVSGDEAFYTFLYLTRDTFSPWENLALLLQNYHNIDFQGLAPIVRDFYVFIPTWLWPGRPSIVLNSANYFTWEVLNNHSGLAISPTLIGSLVVMGGALFIPLGAIVVGLIIKWFDWLYELGNREPNRYKAAILHSFCFGAIFNMIVLAREGLDSFVSRVVFFLVVFGASLLVAKLLFWLFDSAGLIHKRTTSLPQAQVERKL</sequence>
<protein>
    <recommendedName>
        <fullName evidence="1">Probable ECA polymerase</fullName>
    </recommendedName>
</protein>